<proteinExistence type="evidence at transcript level"/>
<feature type="peptide" id="PRO_0000392276" description="Mu-conotoxin-like Cal 12.1.2h">
    <location>
        <begin position="1"/>
        <end position="44"/>
    </location>
</feature>
<feature type="modified residue" description="6'-bromotryptophan" evidence="1">
    <location>
        <position position="17"/>
    </location>
</feature>
<feature type="modified residue" description="4-hydroxyproline" evidence="1">
    <location>
        <position position="23"/>
    </location>
</feature>
<feature type="modified residue" description="6'-bromotryptophan" evidence="1">
    <location>
        <position position="36"/>
    </location>
</feature>
<feature type="modified residue" description="6'-bromotryptophan" evidence="1">
    <location>
        <position position="37"/>
    </location>
</feature>
<feature type="modified residue" description="4-hydroxyproline" evidence="1">
    <location>
        <position position="39"/>
    </location>
</feature>
<feature type="modified residue" description="6'-bromotryptophan" evidence="1">
    <location>
        <position position="43"/>
    </location>
</feature>
<feature type="disulfide bond" evidence="2">
    <location>
        <begin position="3"/>
        <end position="16"/>
    </location>
</feature>
<feature type="disulfide bond" evidence="1">
    <location>
        <begin position="11"/>
        <end position="28"/>
    </location>
</feature>
<feature type="disulfide bond" evidence="1">
    <location>
        <begin position="18"/>
        <end position="33"/>
    </location>
</feature>
<feature type="disulfide bond" evidence="1">
    <location>
        <begin position="27"/>
        <end position="38"/>
    </location>
</feature>
<protein>
    <recommendedName>
        <fullName>Mu-conotoxin-like Cal 12.1.2h</fullName>
    </recommendedName>
    <alternativeName>
        <fullName>Conotoxin CalTx 12.1.3G</fullName>
    </alternativeName>
</protein>
<evidence type="ECO:0000250" key="1"/>
<evidence type="ECO:0000305" key="2"/>
<keyword id="KW-0102">Bromination</keyword>
<keyword id="KW-1015">Disulfide bond</keyword>
<keyword id="KW-0379">Hydroxylation</keyword>
<keyword id="KW-0872">Ion channel impairing toxin</keyword>
<keyword id="KW-0528">Neurotoxin</keyword>
<keyword id="KW-0964">Secreted</keyword>
<keyword id="KW-0800">Toxin</keyword>
<name>COC2H_CONCL</name>
<comment type="function">
    <text evidence="1">Mu-conotoxins block voltage-gated sodium channels. This toxin reversibly blocks voltage-gated sodium channel in cephalopods, with no alteration in the voltage dependence of sodium conductance or on the kinetics of inactivation (By similarity).</text>
</comment>
<comment type="subcellular location">
    <subcellularLocation>
        <location evidence="1">Secreted</location>
    </subcellularLocation>
</comment>
<comment type="tissue specificity">
    <text>Expressed by the venom duct.</text>
</comment>
<comment type="domain">
    <text>The cysteine framework is XII (C-C-C-C-CC-C-C).</text>
</comment>
<organism>
    <name type="scientific">Californiconus californicus</name>
    <name type="common">California cone</name>
    <name type="synonym">Conus californicus</name>
    <dbReference type="NCBI Taxonomy" id="1736779"/>
    <lineage>
        <taxon>Eukaryota</taxon>
        <taxon>Metazoa</taxon>
        <taxon>Spiralia</taxon>
        <taxon>Lophotrochozoa</taxon>
        <taxon>Mollusca</taxon>
        <taxon>Gastropoda</taxon>
        <taxon>Caenogastropoda</taxon>
        <taxon>Neogastropoda</taxon>
        <taxon>Conoidea</taxon>
        <taxon>Conidae</taxon>
        <taxon>Californiconus</taxon>
    </lineage>
</organism>
<sequence>DVCDSLVGGRCIHNGCWCERSAPHGNCCNTGGCVWWWCPGTKWD</sequence>
<accession>A6YR37</accession>
<reference key="1">
    <citation type="journal article" date="2011" name="J. Exp. Biol.">
        <title>A diverse family of novel peptide toxins from an unusual cone snail, Conus californicus.</title>
        <authorList>
            <person name="Gilly W.F."/>
            <person name="Richmond T.A."/>
            <person name="Duda T.F. Jr."/>
            <person name="Elliger C."/>
            <person name="Lebaric Z."/>
            <person name="Schulz J."/>
            <person name="Bingham J.P."/>
            <person name="Sweedler J.V."/>
        </authorList>
    </citation>
    <scope>NUCLEOTIDE SEQUENCE [MRNA]</scope>
    <source>
        <tissue>Venom duct</tissue>
    </source>
</reference>
<dbReference type="EMBL" id="EF644191">
    <property type="protein sequence ID" value="ABR92961.1"/>
    <property type="molecule type" value="mRNA"/>
</dbReference>
<dbReference type="ConoServer" id="810">
    <property type="toxin name" value="Cal12.1.2h"/>
</dbReference>
<dbReference type="GO" id="GO:0005576">
    <property type="term" value="C:extracellular region"/>
    <property type="evidence" value="ECO:0007669"/>
    <property type="project" value="UniProtKB-SubCell"/>
</dbReference>
<dbReference type="GO" id="GO:0099106">
    <property type="term" value="F:ion channel regulator activity"/>
    <property type="evidence" value="ECO:0007669"/>
    <property type="project" value="UniProtKB-KW"/>
</dbReference>
<dbReference type="GO" id="GO:0090729">
    <property type="term" value="F:toxin activity"/>
    <property type="evidence" value="ECO:0007669"/>
    <property type="project" value="UniProtKB-KW"/>
</dbReference>